<proteinExistence type="inferred from homology"/>
<protein>
    <recommendedName>
        <fullName evidence="1">Phosphoribosylformylglycinamidine cyclo-ligase</fullName>
        <ecNumber evidence="1">6.3.3.1</ecNumber>
    </recommendedName>
    <alternativeName>
        <fullName evidence="1">AIR synthase</fullName>
    </alternativeName>
    <alternativeName>
        <fullName evidence="1">AIRS</fullName>
    </alternativeName>
    <alternativeName>
        <fullName evidence="1">Phosphoribosyl-aminoimidazole synthetase</fullName>
    </alternativeName>
</protein>
<gene>
    <name evidence="1" type="primary">purM</name>
    <name type="ordered locus">ACICU_02849</name>
</gene>
<evidence type="ECO:0000255" key="1">
    <source>
        <dbReference type="HAMAP-Rule" id="MF_00741"/>
    </source>
</evidence>
<comment type="catalytic activity">
    <reaction evidence="1">
        <text>2-formamido-N(1)-(5-O-phospho-beta-D-ribosyl)acetamidine + ATP = 5-amino-1-(5-phospho-beta-D-ribosyl)imidazole + ADP + phosphate + H(+)</text>
        <dbReference type="Rhea" id="RHEA:23032"/>
        <dbReference type="ChEBI" id="CHEBI:15378"/>
        <dbReference type="ChEBI" id="CHEBI:30616"/>
        <dbReference type="ChEBI" id="CHEBI:43474"/>
        <dbReference type="ChEBI" id="CHEBI:137981"/>
        <dbReference type="ChEBI" id="CHEBI:147287"/>
        <dbReference type="ChEBI" id="CHEBI:456216"/>
        <dbReference type="EC" id="6.3.3.1"/>
    </reaction>
</comment>
<comment type="pathway">
    <text evidence="1">Purine metabolism; IMP biosynthesis via de novo pathway; 5-amino-1-(5-phospho-D-ribosyl)imidazole from N(2)-formyl-N(1)-(5-phospho-D-ribosyl)glycinamide: step 2/2.</text>
</comment>
<comment type="subcellular location">
    <subcellularLocation>
        <location evidence="1">Cytoplasm</location>
    </subcellularLocation>
</comment>
<comment type="similarity">
    <text evidence="1">Belongs to the AIR synthase family.</text>
</comment>
<dbReference type="EC" id="6.3.3.1" evidence="1"/>
<dbReference type="EMBL" id="CP000863">
    <property type="protein sequence ID" value="ACC58161.1"/>
    <property type="molecule type" value="Genomic_DNA"/>
</dbReference>
<dbReference type="RefSeq" id="WP_000071984.1">
    <property type="nucleotide sequence ID" value="NZ_CP031380.1"/>
</dbReference>
<dbReference type="SMR" id="B2HWV2"/>
<dbReference type="GeneID" id="92894879"/>
<dbReference type="KEGG" id="abc:ACICU_02849"/>
<dbReference type="HOGENOM" id="CLU_047116_0_0_6"/>
<dbReference type="UniPathway" id="UPA00074">
    <property type="reaction ID" value="UER00129"/>
</dbReference>
<dbReference type="Proteomes" id="UP000008839">
    <property type="component" value="Chromosome"/>
</dbReference>
<dbReference type="GO" id="GO:0005829">
    <property type="term" value="C:cytosol"/>
    <property type="evidence" value="ECO:0007669"/>
    <property type="project" value="TreeGrafter"/>
</dbReference>
<dbReference type="GO" id="GO:0005524">
    <property type="term" value="F:ATP binding"/>
    <property type="evidence" value="ECO:0007669"/>
    <property type="project" value="UniProtKB-KW"/>
</dbReference>
<dbReference type="GO" id="GO:0004637">
    <property type="term" value="F:phosphoribosylamine-glycine ligase activity"/>
    <property type="evidence" value="ECO:0007669"/>
    <property type="project" value="TreeGrafter"/>
</dbReference>
<dbReference type="GO" id="GO:0004641">
    <property type="term" value="F:phosphoribosylformylglycinamidine cyclo-ligase activity"/>
    <property type="evidence" value="ECO:0007669"/>
    <property type="project" value="UniProtKB-UniRule"/>
</dbReference>
<dbReference type="GO" id="GO:0006189">
    <property type="term" value="P:'de novo' IMP biosynthetic process"/>
    <property type="evidence" value="ECO:0007669"/>
    <property type="project" value="UniProtKB-UniRule"/>
</dbReference>
<dbReference type="GO" id="GO:0046084">
    <property type="term" value="P:adenine biosynthetic process"/>
    <property type="evidence" value="ECO:0007669"/>
    <property type="project" value="TreeGrafter"/>
</dbReference>
<dbReference type="CDD" id="cd02196">
    <property type="entry name" value="PurM"/>
    <property type="match status" value="1"/>
</dbReference>
<dbReference type="FunFam" id="3.30.1330.10:FF:000001">
    <property type="entry name" value="Phosphoribosylformylglycinamidine cyclo-ligase"/>
    <property type="match status" value="1"/>
</dbReference>
<dbReference type="FunFam" id="3.90.650.10:FF:000001">
    <property type="entry name" value="Phosphoribosylformylglycinamidine cyclo-ligase"/>
    <property type="match status" value="1"/>
</dbReference>
<dbReference type="Gene3D" id="3.90.650.10">
    <property type="entry name" value="PurM-like C-terminal domain"/>
    <property type="match status" value="1"/>
</dbReference>
<dbReference type="Gene3D" id="3.30.1330.10">
    <property type="entry name" value="PurM-like, N-terminal domain"/>
    <property type="match status" value="1"/>
</dbReference>
<dbReference type="HAMAP" id="MF_00741">
    <property type="entry name" value="AIRS"/>
    <property type="match status" value="1"/>
</dbReference>
<dbReference type="InterPro" id="IPR010918">
    <property type="entry name" value="PurM-like_C_dom"/>
</dbReference>
<dbReference type="InterPro" id="IPR036676">
    <property type="entry name" value="PurM-like_C_sf"/>
</dbReference>
<dbReference type="InterPro" id="IPR016188">
    <property type="entry name" value="PurM-like_N"/>
</dbReference>
<dbReference type="InterPro" id="IPR036921">
    <property type="entry name" value="PurM-like_N_sf"/>
</dbReference>
<dbReference type="InterPro" id="IPR004733">
    <property type="entry name" value="PurM_cligase"/>
</dbReference>
<dbReference type="NCBIfam" id="TIGR00878">
    <property type="entry name" value="purM"/>
    <property type="match status" value="1"/>
</dbReference>
<dbReference type="PANTHER" id="PTHR10520:SF12">
    <property type="entry name" value="TRIFUNCTIONAL PURINE BIOSYNTHETIC PROTEIN ADENOSINE-3"/>
    <property type="match status" value="1"/>
</dbReference>
<dbReference type="PANTHER" id="PTHR10520">
    <property type="entry name" value="TRIFUNCTIONAL PURINE BIOSYNTHETIC PROTEIN ADENOSINE-3-RELATED"/>
    <property type="match status" value="1"/>
</dbReference>
<dbReference type="Pfam" id="PF00586">
    <property type="entry name" value="AIRS"/>
    <property type="match status" value="1"/>
</dbReference>
<dbReference type="Pfam" id="PF02769">
    <property type="entry name" value="AIRS_C"/>
    <property type="match status" value="1"/>
</dbReference>
<dbReference type="SUPFAM" id="SSF56042">
    <property type="entry name" value="PurM C-terminal domain-like"/>
    <property type="match status" value="1"/>
</dbReference>
<dbReference type="SUPFAM" id="SSF55326">
    <property type="entry name" value="PurM N-terminal domain-like"/>
    <property type="match status" value="1"/>
</dbReference>
<name>PUR5_ACIBC</name>
<reference key="1">
    <citation type="journal article" date="2008" name="Antimicrob. Agents Chemother.">
        <title>Whole-genome pyrosequencing of an epidemic multidrug-resistant Acinetobacter baumannii strain belonging to the European clone II group.</title>
        <authorList>
            <person name="Iacono M."/>
            <person name="Villa L."/>
            <person name="Fortini D."/>
            <person name="Bordoni R."/>
            <person name="Imperi F."/>
            <person name="Bonnal R.J."/>
            <person name="Sicheritz-Ponten T."/>
            <person name="De Bellis G."/>
            <person name="Visca P."/>
            <person name="Cassone A."/>
            <person name="Carattoli A."/>
        </authorList>
    </citation>
    <scope>NUCLEOTIDE SEQUENCE [LARGE SCALE GENOMIC DNA]</scope>
    <source>
        <strain>ACICU</strain>
    </source>
</reference>
<sequence length="356" mass="37875">MSNSTSTPNTGLSYKDAGVDIEAGDALVDRIKSVAKRTTRPEVMGGLGGFGALCKIPKGYEEPVLVSGTDGVGTKLRLALNLNRHDTIGQDLVAMCVNDLLVCGAEPLFFLDYYATGHLNVDVAANVVTGIGKGCELAGCALVGGETAEMPGMYEGEDYDLAGFAVGVVEQSKIIDGSKVKSGDVLIGVASSGAHSNGYSLLRKILDVKNVDLTQVIDGRPLADVAMEPTRIYVKPVLELCKQVDVHAMAHITGGGLPGNLPRVLPNGAQAVINEASWEWPELFKLLQREGNVERFEMYRTFNCGVGMVIAVDANDAEKAIEVLNAQGEKAWKIGHIQENAESVEGADEKIRVIFE</sequence>
<organism>
    <name type="scientific">Acinetobacter baumannii (strain ACICU)</name>
    <dbReference type="NCBI Taxonomy" id="405416"/>
    <lineage>
        <taxon>Bacteria</taxon>
        <taxon>Pseudomonadati</taxon>
        <taxon>Pseudomonadota</taxon>
        <taxon>Gammaproteobacteria</taxon>
        <taxon>Moraxellales</taxon>
        <taxon>Moraxellaceae</taxon>
        <taxon>Acinetobacter</taxon>
        <taxon>Acinetobacter calcoaceticus/baumannii complex</taxon>
    </lineage>
</organism>
<feature type="chain" id="PRO_1000192983" description="Phosphoribosylformylglycinamidine cyclo-ligase">
    <location>
        <begin position="1"/>
        <end position="356"/>
    </location>
</feature>
<keyword id="KW-0067">ATP-binding</keyword>
<keyword id="KW-0963">Cytoplasm</keyword>
<keyword id="KW-0436">Ligase</keyword>
<keyword id="KW-0547">Nucleotide-binding</keyword>
<keyword id="KW-0658">Purine biosynthesis</keyword>
<accession>B2HWV2</accession>